<sequence>MSENIPLRVQFKRMKAAEWARSDVILLESEIGFETDTGFARAGDGHNRFSDLGYISPLDYNLLTNKPNIDGLATKVETAQKLQQKADKETVYTKAESKQELDKKLNLKGGVMTGQLKFKPAATVAYSSSTGGAVNIDLSSTRGAGVVVYSDNDTSDGPLMSLRTGKETFNQSALFVDYKGTTNAVNIAMRHATTPNFSSALNITSGNENGSAMQLRGSEKALGTLKITHENPSIGADYDKNAARYPLILSKRQNGAGTAAQGIYINSTSGTTGKLLRIRNLSDDKFYVKSDGGFYAKETSQIDGNLKLKDPTANDHAATKAYVDKAISELKKLILKK</sequence>
<protein>
    <recommendedName>
        <fullName>Hyaluronoglucosaminidase</fullName>
        <shortName>Hyaluronidase</shortName>
        <ecNumber>3.2.1.35</ecNumber>
    </recommendedName>
</protein>
<feature type="chain" id="PRO_0000057724" description="Hyaluronoglucosaminidase">
    <location>
        <begin position="1"/>
        <end position="337"/>
    </location>
</feature>
<dbReference type="EC" id="3.2.1.35"/>
<dbReference type="EMBL" id="U28144">
    <property type="protein sequence ID" value="AAA86895.1"/>
    <property type="molecule type" value="Genomic_DNA"/>
</dbReference>
<dbReference type="SMR" id="Q54699"/>
<dbReference type="CAZy" id="PL16">
    <property type="family name" value="Polysaccharide Lyase Family 16"/>
</dbReference>
<dbReference type="BRENDA" id="3.2.1.36">
    <property type="organism ID" value="8503"/>
</dbReference>
<dbReference type="SABIO-RK" id="Q54699"/>
<dbReference type="GO" id="GO:0044423">
    <property type="term" value="C:virion component"/>
    <property type="evidence" value="ECO:0007669"/>
    <property type="project" value="UniProtKB-KW"/>
</dbReference>
<dbReference type="GO" id="GO:0004415">
    <property type="term" value="F:hyalurononglucosaminidase activity"/>
    <property type="evidence" value="ECO:0007669"/>
    <property type="project" value="UniProtKB-EC"/>
</dbReference>
<dbReference type="GO" id="GO:0045227">
    <property type="term" value="P:capsule polysaccharide biosynthetic process"/>
    <property type="evidence" value="ECO:0007669"/>
    <property type="project" value="InterPro"/>
</dbReference>
<dbReference type="GO" id="GO:0098994">
    <property type="term" value="P:symbiont entry into host cell via disruption of host cell envelope"/>
    <property type="evidence" value="ECO:0007669"/>
    <property type="project" value="UniProtKB-KW"/>
</dbReference>
<dbReference type="GO" id="GO:0098996">
    <property type="term" value="P:symbiont entry into host cell via disruption of host cell glycocalyx"/>
    <property type="evidence" value="ECO:0007669"/>
    <property type="project" value="UniProtKB-KW"/>
</dbReference>
<dbReference type="InterPro" id="IPR009860">
    <property type="entry name" value="Hyaluronidase_bac"/>
</dbReference>
<dbReference type="InterPro" id="IPR041352">
    <property type="entry name" value="Mtd_N"/>
</dbReference>
<dbReference type="Pfam" id="PF07212">
    <property type="entry name" value="Hyaluronidase_1"/>
    <property type="match status" value="1"/>
</dbReference>
<dbReference type="Pfam" id="PF18454">
    <property type="entry name" value="Mtd_N"/>
    <property type="match status" value="1"/>
</dbReference>
<dbReference type="SUPFAM" id="SSF69349">
    <property type="entry name" value="Phage fibre proteins"/>
    <property type="match status" value="1"/>
</dbReference>
<reference key="1">
    <citation type="journal article" date="1995" name="Infect. Immun.">
        <title>Analysis of a second bacteriophage hyaluronidase gene from Streptococcus pyogenes: evidence for a third hyaluronidase involved in extracellular enzymatic activity.</title>
        <authorList>
            <person name="Hynes W.L."/>
            <person name="Hancock L."/>
            <person name="Ferretti J.J."/>
        </authorList>
    </citation>
    <scope>NUCLEOTIDE SEQUENCE [GENOMIC DNA]</scope>
</reference>
<proteinExistence type="inferred from homology"/>
<organismHost>
    <name type="scientific">Streptococcus pyogenes</name>
    <dbReference type="NCBI Taxonomy" id="1314"/>
</organismHost>
<accession>Q54699</accession>
<evidence type="ECO:0000305" key="1"/>
<comment type="function">
    <text>The hyaluronidase of this bacteriophage mediates the penetration of the hyaluronic capsule of Streptococcus pyogenes.</text>
</comment>
<comment type="catalytic activity">
    <reaction>
        <text>Random hydrolysis of (1-&gt;4)-linkages between N-acetyl-beta-D-glucosamine and D-glucuronate residues in hyaluronate.</text>
        <dbReference type="EC" id="3.2.1.35"/>
    </reaction>
</comment>
<comment type="subcellular location">
    <subcellularLocation>
        <location evidence="1">Virion</location>
    </subcellularLocation>
</comment>
<comment type="similarity">
    <text evidence="1">Belongs to the glycosyl hydrolase 69 family.</text>
</comment>
<organism>
    <name type="scientific">Streptococcus pyogenes phage H10403</name>
    <dbReference type="NCBI Taxonomy" id="86065"/>
    <lineage>
        <taxon>Viruses</taxon>
    </lineage>
</organism>
<name>HYLP2_BPH45</name>
<keyword id="KW-1238">Degradation of host capsule during virus entry</keyword>
<keyword id="KW-1235">Degradation of host cell envelope components during virus entry</keyword>
<keyword id="KW-0326">Glycosidase</keyword>
<keyword id="KW-0378">Hydrolase</keyword>
<keyword id="KW-0946">Virion</keyword>
<keyword id="KW-1160">Virus entry into host cell</keyword>
<gene>
    <name type="primary">HYLP2</name>
</gene>